<dbReference type="EMBL" id="BX571870">
    <property type="protein sequence ID" value="CAE15654.1"/>
    <property type="molecule type" value="Genomic_DNA"/>
</dbReference>
<dbReference type="RefSeq" id="WP_011147475.1">
    <property type="nucleotide sequence ID" value="NC_005126.1"/>
</dbReference>
<dbReference type="SMR" id="Q7N227"/>
<dbReference type="STRING" id="243265.plu3280"/>
<dbReference type="GeneID" id="48849535"/>
<dbReference type="KEGG" id="plu:plu3280"/>
<dbReference type="eggNOG" id="COG1076">
    <property type="taxonomic scope" value="Bacteria"/>
</dbReference>
<dbReference type="HOGENOM" id="CLU_068529_2_0_6"/>
<dbReference type="OrthoDB" id="287587at2"/>
<dbReference type="Proteomes" id="UP000002514">
    <property type="component" value="Chromosome"/>
</dbReference>
<dbReference type="GO" id="GO:1990230">
    <property type="term" value="C:iron-sulfur cluster transfer complex"/>
    <property type="evidence" value="ECO:0007669"/>
    <property type="project" value="TreeGrafter"/>
</dbReference>
<dbReference type="GO" id="GO:0001671">
    <property type="term" value="F:ATPase activator activity"/>
    <property type="evidence" value="ECO:0007669"/>
    <property type="project" value="InterPro"/>
</dbReference>
<dbReference type="GO" id="GO:0051087">
    <property type="term" value="F:protein-folding chaperone binding"/>
    <property type="evidence" value="ECO:0007669"/>
    <property type="project" value="InterPro"/>
</dbReference>
<dbReference type="GO" id="GO:0044571">
    <property type="term" value="P:[2Fe-2S] cluster assembly"/>
    <property type="evidence" value="ECO:0007669"/>
    <property type="project" value="InterPro"/>
</dbReference>
<dbReference type="GO" id="GO:0051259">
    <property type="term" value="P:protein complex oligomerization"/>
    <property type="evidence" value="ECO:0007669"/>
    <property type="project" value="InterPro"/>
</dbReference>
<dbReference type="GO" id="GO:0006457">
    <property type="term" value="P:protein folding"/>
    <property type="evidence" value="ECO:0007669"/>
    <property type="project" value="UniProtKB-UniRule"/>
</dbReference>
<dbReference type="CDD" id="cd06257">
    <property type="entry name" value="DnaJ"/>
    <property type="match status" value="1"/>
</dbReference>
<dbReference type="FunFam" id="1.10.287.110:FF:000008">
    <property type="entry name" value="Co-chaperone protein HscB"/>
    <property type="match status" value="1"/>
</dbReference>
<dbReference type="Gene3D" id="1.10.287.110">
    <property type="entry name" value="DnaJ domain"/>
    <property type="match status" value="1"/>
</dbReference>
<dbReference type="Gene3D" id="1.20.1280.20">
    <property type="entry name" value="HscB, C-terminal domain"/>
    <property type="match status" value="1"/>
</dbReference>
<dbReference type="HAMAP" id="MF_00682">
    <property type="entry name" value="HscB"/>
    <property type="match status" value="1"/>
</dbReference>
<dbReference type="InterPro" id="IPR001623">
    <property type="entry name" value="DnaJ_domain"/>
</dbReference>
<dbReference type="InterPro" id="IPR004640">
    <property type="entry name" value="HscB"/>
</dbReference>
<dbReference type="InterPro" id="IPR036386">
    <property type="entry name" value="HscB_C_sf"/>
</dbReference>
<dbReference type="InterPro" id="IPR009073">
    <property type="entry name" value="HscB_oligo_C"/>
</dbReference>
<dbReference type="InterPro" id="IPR036869">
    <property type="entry name" value="J_dom_sf"/>
</dbReference>
<dbReference type="NCBIfam" id="TIGR00714">
    <property type="entry name" value="hscB"/>
    <property type="match status" value="1"/>
</dbReference>
<dbReference type="NCBIfam" id="NF003449">
    <property type="entry name" value="PRK05014.1"/>
    <property type="match status" value="1"/>
</dbReference>
<dbReference type="PANTHER" id="PTHR14021">
    <property type="entry name" value="IRON-SULFUR CLUSTER CO-CHAPERONE PROTEIN HSCB"/>
    <property type="match status" value="1"/>
</dbReference>
<dbReference type="PANTHER" id="PTHR14021:SF15">
    <property type="entry name" value="IRON-SULFUR CLUSTER CO-CHAPERONE PROTEIN HSCB"/>
    <property type="match status" value="1"/>
</dbReference>
<dbReference type="Pfam" id="PF07743">
    <property type="entry name" value="HSCB_C"/>
    <property type="match status" value="1"/>
</dbReference>
<dbReference type="SMART" id="SM00271">
    <property type="entry name" value="DnaJ"/>
    <property type="match status" value="1"/>
</dbReference>
<dbReference type="SUPFAM" id="SSF46565">
    <property type="entry name" value="Chaperone J-domain"/>
    <property type="match status" value="1"/>
</dbReference>
<dbReference type="SUPFAM" id="SSF47144">
    <property type="entry name" value="HSC20 (HSCB), C-terminal oligomerisation domain"/>
    <property type="match status" value="1"/>
</dbReference>
<dbReference type="PROSITE" id="PS50076">
    <property type="entry name" value="DNAJ_2"/>
    <property type="match status" value="1"/>
</dbReference>
<organism>
    <name type="scientific">Photorhabdus laumondii subsp. laumondii (strain DSM 15139 / CIP 105565 / TT01)</name>
    <name type="common">Photorhabdus luminescens subsp. laumondii</name>
    <dbReference type="NCBI Taxonomy" id="243265"/>
    <lineage>
        <taxon>Bacteria</taxon>
        <taxon>Pseudomonadati</taxon>
        <taxon>Pseudomonadota</taxon>
        <taxon>Gammaproteobacteria</taxon>
        <taxon>Enterobacterales</taxon>
        <taxon>Morganellaceae</taxon>
        <taxon>Photorhabdus</taxon>
    </lineage>
</organism>
<gene>
    <name evidence="1" type="primary">hscB</name>
    <name type="ordered locus">plu3280</name>
</gene>
<keyword id="KW-0143">Chaperone</keyword>
<keyword id="KW-1185">Reference proteome</keyword>
<comment type="function">
    <text evidence="1">Co-chaperone involved in the maturation of iron-sulfur cluster-containing proteins. Seems to help targeting proteins to be folded toward HscA.</text>
</comment>
<comment type="subunit">
    <text evidence="1">Interacts with HscA and stimulates its ATPase activity. Interacts with IscU.</text>
</comment>
<comment type="similarity">
    <text evidence="1">Belongs to the HscB family.</text>
</comment>
<protein>
    <recommendedName>
        <fullName evidence="1">Co-chaperone protein HscB</fullName>
    </recommendedName>
    <alternativeName>
        <fullName evidence="1">Hsc20</fullName>
    </alternativeName>
</protein>
<proteinExistence type="inferred from homology"/>
<reference key="1">
    <citation type="journal article" date="2003" name="Nat. Biotechnol.">
        <title>The genome sequence of the entomopathogenic bacterium Photorhabdus luminescens.</title>
        <authorList>
            <person name="Duchaud E."/>
            <person name="Rusniok C."/>
            <person name="Frangeul L."/>
            <person name="Buchrieser C."/>
            <person name="Givaudan A."/>
            <person name="Taourit S."/>
            <person name="Bocs S."/>
            <person name="Boursaux-Eude C."/>
            <person name="Chandler M."/>
            <person name="Charles J.-F."/>
            <person name="Dassa E."/>
            <person name="Derose R."/>
            <person name="Derzelle S."/>
            <person name="Freyssinet G."/>
            <person name="Gaudriault S."/>
            <person name="Medigue C."/>
            <person name="Lanois A."/>
            <person name="Powell K."/>
            <person name="Siguier P."/>
            <person name="Vincent R."/>
            <person name="Wingate V."/>
            <person name="Zouine M."/>
            <person name="Glaser P."/>
            <person name="Boemare N."/>
            <person name="Danchin A."/>
            <person name="Kunst F."/>
        </authorList>
    </citation>
    <scope>NUCLEOTIDE SEQUENCE [LARGE SCALE GENOMIC DNA]</scope>
    <source>
        <strain>DSM 15139 / CIP 105565 / TT01</strain>
    </source>
</reference>
<sequence>MDYFTLFGLPARYTVDREQLASCYQELQRQFHPDRFASQPEREKTLALQQAVTINDGYQTLKHPLKRAEYMLSLHGFDLANEQHTMNDNAFLMEQLMLREELECIADKANPEVALADFAARLNGMIKTRSQLMVQQLDEQQWEQAADTVRKLRFLDKLQQQVEQLEERLLDDF</sequence>
<accession>Q7N227</accession>
<feature type="chain" id="PRO_0000070977" description="Co-chaperone protein HscB">
    <location>
        <begin position="1"/>
        <end position="173"/>
    </location>
</feature>
<feature type="domain" description="J" evidence="1">
    <location>
        <begin position="2"/>
        <end position="74"/>
    </location>
</feature>
<name>HSCB_PHOLL</name>
<evidence type="ECO:0000255" key="1">
    <source>
        <dbReference type="HAMAP-Rule" id="MF_00682"/>
    </source>
</evidence>